<comment type="function">
    <text evidence="1">Required for respiratory activity and maintenance and expression of the mitochondrial genome.</text>
</comment>
<comment type="subcellular location">
    <subcellularLocation>
        <location evidence="1">Mitochondrion</location>
    </subcellularLocation>
</comment>
<comment type="similarity">
    <text evidence="4">Belongs to the RRG9 family.</text>
</comment>
<reference key="1">
    <citation type="journal article" date="2009" name="Nature">
        <title>Evolution of pathogenicity and sexual reproduction in eight Candida genomes.</title>
        <authorList>
            <person name="Butler G."/>
            <person name="Rasmussen M.D."/>
            <person name="Lin M.F."/>
            <person name="Santos M.A.S."/>
            <person name="Sakthikumar S."/>
            <person name="Munro C.A."/>
            <person name="Rheinbay E."/>
            <person name="Grabherr M."/>
            <person name="Forche A."/>
            <person name="Reedy J.L."/>
            <person name="Agrafioti I."/>
            <person name="Arnaud M.B."/>
            <person name="Bates S."/>
            <person name="Brown A.J.P."/>
            <person name="Brunke S."/>
            <person name="Costanzo M.C."/>
            <person name="Fitzpatrick D.A."/>
            <person name="de Groot P.W.J."/>
            <person name="Harris D."/>
            <person name="Hoyer L.L."/>
            <person name="Hube B."/>
            <person name="Klis F.M."/>
            <person name="Kodira C."/>
            <person name="Lennard N."/>
            <person name="Logue M.E."/>
            <person name="Martin R."/>
            <person name="Neiman A.M."/>
            <person name="Nikolaou E."/>
            <person name="Quail M.A."/>
            <person name="Quinn J."/>
            <person name="Santos M.C."/>
            <person name="Schmitzberger F.F."/>
            <person name="Sherlock G."/>
            <person name="Shah P."/>
            <person name="Silverstein K.A.T."/>
            <person name="Skrzypek M.S."/>
            <person name="Soll D."/>
            <person name="Staggs R."/>
            <person name="Stansfield I."/>
            <person name="Stumpf M.P.H."/>
            <person name="Sudbery P.E."/>
            <person name="Srikantha T."/>
            <person name="Zeng Q."/>
            <person name="Berman J."/>
            <person name="Berriman M."/>
            <person name="Heitman J."/>
            <person name="Gow N.A.R."/>
            <person name="Lorenz M.C."/>
            <person name="Birren B.W."/>
            <person name="Kellis M."/>
            <person name="Cuomo C.A."/>
        </authorList>
    </citation>
    <scope>NUCLEOTIDE SEQUENCE [LARGE SCALE GENOMIC DNA]</scope>
    <source>
        <strain>ATCC 6260 / CBS 566 / DSM 6381 / JCM 1539 / NBRC 10279 / NRRL Y-324</strain>
    </source>
</reference>
<proteinExistence type="inferred from homology"/>
<dbReference type="EMBL" id="CH408158">
    <property type="protein sequence ID" value="EDK39654.2"/>
    <property type="molecule type" value="Genomic_DNA"/>
</dbReference>
<dbReference type="RefSeq" id="XP_001484371.1">
    <property type="nucleotide sequence ID" value="XM_001484321.1"/>
</dbReference>
<dbReference type="SMR" id="A5DKF1"/>
<dbReference type="FunCoup" id="A5DKF1">
    <property type="interactions" value="33"/>
</dbReference>
<dbReference type="GeneID" id="5126346"/>
<dbReference type="KEGG" id="pgu:PGUG_03752"/>
<dbReference type="VEuPathDB" id="FungiDB:PGUG_03752"/>
<dbReference type="eggNOG" id="ENOG502S7IA">
    <property type="taxonomic scope" value="Eukaryota"/>
</dbReference>
<dbReference type="HOGENOM" id="CLU_106794_0_0_1"/>
<dbReference type="InParanoid" id="A5DKF1"/>
<dbReference type="OMA" id="KRYGNWN"/>
<dbReference type="OrthoDB" id="5578174at2759"/>
<dbReference type="Proteomes" id="UP000001997">
    <property type="component" value="Unassembled WGS sequence"/>
</dbReference>
<dbReference type="GO" id="GO:0005739">
    <property type="term" value="C:mitochondrion"/>
    <property type="evidence" value="ECO:0007669"/>
    <property type="project" value="UniProtKB-SubCell"/>
</dbReference>
<dbReference type="GO" id="GO:0005634">
    <property type="term" value="C:nucleus"/>
    <property type="evidence" value="ECO:0007669"/>
    <property type="project" value="TreeGrafter"/>
</dbReference>
<dbReference type="InterPro" id="IPR010487">
    <property type="entry name" value="NGRN/Rrg9"/>
</dbReference>
<dbReference type="PANTHER" id="PTHR13475">
    <property type="entry name" value="NEUGRIN"/>
    <property type="match status" value="1"/>
</dbReference>
<dbReference type="PANTHER" id="PTHR13475:SF3">
    <property type="entry name" value="NEUGRIN"/>
    <property type="match status" value="1"/>
</dbReference>
<dbReference type="Pfam" id="PF06413">
    <property type="entry name" value="Neugrin"/>
    <property type="match status" value="1"/>
</dbReference>
<organism>
    <name type="scientific">Meyerozyma guilliermondii (strain ATCC 6260 / CBS 566 / DSM 6381 / JCM 1539 / NBRC 10279 / NRRL Y-324)</name>
    <name type="common">Yeast</name>
    <name type="synonym">Candida guilliermondii</name>
    <dbReference type="NCBI Taxonomy" id="294746"/>
    <lineage>
        <taxon>Eukaryota</taxon>
        <taxon>Fungi</taxon>
        <taxon>Dikarya</taxon>
        <taxon>Ascomycota</taxon>
        <taxon>Saccharomycotina</taxon>
        <taxon>Pichiomycetes</taxon>
        <taxon>Debaryomycetaceae</taxon>
        <taxon>Meyerozyma</taxon>
    </lineage>
</organism>
<feature type="transit peptide" description="Mitochondrion" evidence="2">
    <location>
        <begin position="1"/>
        <end position="22"/>
    </location>
</feature>
<feature type="chain" id="PRO_0000407958" description="Required for respiratory growth protein 9, mitochondrial">
    <location>
        <begin position="23"/>
        <end position="196"/>
    </location>
</feature>
<feature type="region of interest" description="Disordered" evidence="3">
    <location>
        <begin position="19"/>
        <end position="48"/>
    </location>
</feature>
<feature type="region of interest" description="Disordered" evidence="3">
    <location>
        <begin position="103"/>
        <end position="196"/>
    </location>
</feature>
<feature type="compositionally biased region" description="Polar residues" evidence="3">
    <location>
        <begin position="29"/>
        <end position="38"/>
    </location>
</feature>
<feature type="compositionally biased region" description="Polar residues" evidence="3">
    <location>
        <begin position="118"/>
        <end position="133"/>
    </location>
</feature>
<feature type="compositionally biased region" description="Basic residues" evidence="3">
    <location>
        <begin position="159"/>
        <end position="170"/>
    </location>
</feature>
<name>RRG9_PICGU</name>
<protein>
    <recommendedName>
        <fullName>Required for respiratory growth protein 9, mitochondrial</fullName>
    </recommendedName>
</protein>
<sequence length="196" mass="22998">MFGLRNLRRGLSLCRFYSKPRPTPAPIKQDSQQSSQLPEWQKREKAHRKRYGNWNPTKRLSRAQMQDLRSLKQQMPHMKTIDFANLFKVSPEAIRRILQSKWTPTEEEEARLAARAQSAKNKSAQRRQQQIDNLKQAHSRMQPVTGIVEDARTSAIRPRNPRQRKPRQHQGQKTQQTQHDHDSHQPYVPSVGDVLE</sequence>
<gene>
    <name type="primary">RRG9</name>
    <name type="ORF">PGUG_03752</name>
</gene>
<evidence type="ECO:0000250" key="1"/>
<evidence type="ECO:0000255" key="2"/>
<evidence type="ECO:0000256" key="3">
    <source>
        <dbReference type="SAM" id="MobiDB-lite"/>
    </source>
</evidence>
<evidence type="ECO:0000305" key="4"/>
<keyword id="KW-0496">Mitochondrion</keyword>
<keyword id="KW-1185">Reference proteome</keyword>
<keyword id="KW-0809">Transit peptide</keyword>
<accession>A5DKF1</accession>